<dbReference type="EC" id="2.7.11.1"/>
<dbReference type="EMBL" id="BC068699">
    <property type="protein sequence ID" value="AAH68699.1"/>
    <property type="molecule type" value="mRNA"/>
</dbReference>
<dbReference type="RefSeq" id="NP_001084589.1">
    <property type="nucleotide sequence ID" value="NM_001091120.1"/>
</dbReference>
<dbReference type="RefSeq" id="XP_018100452.1">
    <property type="nucleotide sequence ID" value="XM_018244963.1"/>
</dbReference>
<dbReference type="SMR" id="Q6NU98"/>
<dbReference type="DNASU" id="414541"/>
<dbReference type="GeneID" id="414541"/>
<dbReference type="KEGG" id="xla:414541"/>
<dbReference type="AGR" id="Xenbase:XB-GENE-919823"/>
<dbReference type="CTD" id="414541"/>
<dbReference type="Xenbase" id="XB-GENE-919823">
    <property type="gene designation" value="pdik1l.L"/>
</dbReference>
<dbReference type="OMA" id="XAFELEL"/>
<dbReference type="OrthoDB" id="4062651at2759"/>
<dbReference type="Proteomes" id="UP000186698">
    <property type="component" value="Chromosome 2L"/>
</dbReference>
<dbReference type="Bgee" id="414541">
    <property type="expression patterns" value="Expressed in blastula and 19 other cell types or tissues"/>
</dbReference>
<dbReference type="GO" id="GO:0005737">
    <property type="term" value="C:cytoplasm"/>
    <property type="evidence" value="ECO:0000318"/>
    <property type="project" value="GO_Central"/>
</dbReference>
<dbReference type="GO" id="GO:0005634">
    <property type="term" value="C:nucleus"/>
    <property type="evidence" value="ECO:0000318"/>
    <property type="project" value="GO_Central"/>
</dbReference>
<dbReference type="GO" id="GO:0005524">
    <property type="term" value="F:ATP binding"/>
    <property type="evidence" value="ECO:0007669"/>
    <property type="project" value="UniProtKB-KW"/>
</dbReference>
<dbReference type="GO" id="GO:0004672">
    <property type="term" value="F:protein kinase activity"/>
    <property type="evidence" value="ECO:0000318"/>
    <property type="project" value="GO_Central"/>
</dbReference>
<dbReference type="GO" id="GO:0106310">
    <property type="term" value="F:protein serine kinase activity"/>
    <property type="evidence" value="ECO:0007669"/>
    <property type="project" value="RHEA"/>
</dbReference>
<dbReference type="GO" id="GO:0004674">
    <property type="term" value="F:protein serine/threonine kinase activity"/>
    <property type="evidence" value="ECO:0007669"/>
    <property type="project" value="UniProtKB-KW"/>
</dbReference>
<dbReference type="GO" id="GO:0010972">
    <property type="term" value="P:negative regulation of G2/M transition of mitotic cell cycle"/>
    <property type="evidence" value="ECO:0000318"/>
    <property type="project" value="GO_Central"/>
</dbReference>
<dbReference type="GO" id="GO:0110031">
    <property type="term" value="P:negative regulation of G2/MI transition of meiotic cell cycle"/>
    <property type="evidence" value="ECO:0000318"/>
    <property type="project" value="GO_Central"/>
</dbReference>
<dbReference type="CDD" id="cd13977">
    <property type="entry name" value="STKc_PDIK1L"/>
    <property type="match status" value="1"/>
</dbReference>
<dbReference type="FunFam" id="1.10.510.10:FF:000174">
    <property type="entry name" value="Serine/threonine-protein kinase PDIK1L"/>
    <property type="match status" value="1"/>
</dbReference>
<dbReference type="FunFam" id="3.30.200.20:FF:000165">
    <property type="entry name" value="Serine/threonine-protein kinase PDIK1L"/>
    <property type="match status" value="1"/>
</dbReference>
<dbReference type="Gene3D" id="3.30.200.20">
    <property type="entry name" value="Phosphorylase Kinase, domain 1"/>
    <property type="match status" value="1"/>
</dbReference>
<dbReference type="Gene3D" id="1.10.510.10">
    <property type="entry name" value="Transferase(Phosphotransferase) domain 1"/>
    <property type="match status" value="1"/>
</dbReference>
<dbReference type="InterPro" id="IPR050339">
    <property type="entry name" value="CC_SR_Kinase"/>
</dbReference>
<dbReference type="InterPro" id="IPR011009">
    <property type="entry name" value="Kinase-like_dom_sf"/>
</dbReference>
<dbReference type="InterPro" id="IPR000719">
    <property type="entry name" value="Prot_kinase_dom"/>
</dbReference>
<dbReference type="InterPro" id="IPR017441">
    <property type="entry name" value="Protein_kinase_ATP_BS"/>
</dbReference>
<dbReference type="InterPro" id="IPR008271">
    <property type="entry name" value="Ser/Thr_kinase_AS"/>
</dbReference>
<dbReference type="PANTHER" id="PTHR11042">
    <property type="entry name" value="EUKARYOTIC TRANSLATION INITIATION FACTOR 2-ALPHA KINASE EIF2-ALPHA KINASE -RELATED"/>
    <property type="match status" value="1"/>
</dbReference>
<dbReference type="PANTHER" id="PTHR11042:SF58">
    <property type="entry name" value="SERINE_THREONINE-PROTEIN KINASE PDIK1L"/>
    <property type="match status" value="1"/>
</dbReference>
<dbReference type="Pfam" id="PF00069">
    <property type="entry name" value="Pkinase"/>
    <property type="match status" value="1"/>
</dbReference>
<dbReference type="PIRSF" id="PIRSF000654">
    <property type="entry name" value="Integrin-linked_kinase"/>
    <property type="match status" value="1"/>
</dbReference>
<dbReference type="SMART" id="SM00220">
    <property type="entry name" value="S_TKc"/>
    <property type="match status" value="1"/>
</dbReference>
<dbReference type="SUPFAM" id="SSF56112">
    <property type="entry name" value="Protein kinase-like (PK-like)"/>
    <property type="match status" value="1"/>
</dbReference>
<dbReference type="PROSITE" id="PS00107">
    <property type="entry name" value="PROTEIN_KINASE_ATP"/>
    <property type="match status" value="1"/>
</dbReference>
<dbReference type="PROSITE" id="PS50011">
    <property type="entry name" value="PROTEIN_KINASE_DOM"/>
    <property type="match status" value="1"/>
</dbReference>
<dbReference type="PROSITE" id="PS00108">
    <property type="entry name" value="PROTEIN_KINASE_ST"/>
    <property type="match status" value="1"/>
</dbReference>
<gene>
    <name type="primary">pdik1-b</name>
</gene>
<sequence>MVSSQPKYDLIREVGRGSYGLVYEALVRRTGQRVAVKKIRCQAPENVELALREFWALSSIQSQHPNVIHLEECVLQRDGMVQRMLHGSSSVLYLPLVETSLKGEIAFDPRSTYCLWFVMDFCDGGDMNEYILTRRPSRRTNTSFMLQLSSALAFLHKNQIIHRDLKPDNILVCKSRDGVDEPTLKVADFGLSKVCSSSGLNPEEPANVNKSFLSTACGTDFYMAPEVWEGHYTAKADIFALGVILWAMLERITITDTHTKKRLLGGYVQRGAQVVPVGEALLENPKLELLIPVKKKSMNRRMKQLLRQMLSANPQERPDAFQLELKLIQIAFRDFTWET</sequence>
<name>PDK1B_XENLA</name>
<comment type="catalytic activity">
    <reaction>
        <text>L-seryl-[protein] + ATP = O-phospho-L-seryl-[protein] + ADP + H(+)</text>
        <dbReference type="Rhea" id="RHEA:17989"/>
        <dbReference type="Rhea" id="RHEA-COMP:9863"/>
        <dbReference type="Rhea" id="RHEA-COMP:11604"/>
        <dbReference type="ChEBI" id="CHEBI:15378"/>
        <dbReference type="ChEBI" id="CHEBI:29999"/>
        <dbReference type="ChEBI" id="CHEBI:30616"/>
        <dbReference type="ChEBI" id="CHEBI:83421"/>
        <dbReference type="ChEBI" id="CHEBI:456216"/>
        <dbReference type="EC" id="2.7.11.1"/>
    </reaction>
</comment>
<comment type="catalytic activity">
    <reaction>
        <text>L-threonyl-[protein] + ATP = O-phospho-L-threonyl-[protein] + ADP + H(+)</text>
        <dbReference type="Rhea" id="RHEA:46608"/>
        <dbReference type="Rhea" id="RHEA-COMP:11060"/>
        <dbReference type="Rhea" id="RHEA-COMP:11605"/>
        <dbReference type="ChEBI" id="CHEBI:15378"/>
        <dbReference type="ChEBI" id="CHEBI:30013"/>
        <dbReference type="ChEBI" id="CHEBI:30616"/>
        <dbReference type="ChEBI" id="CHEBI:61977"/>
        <dbReference type="ChEBI" id="CHEBI:456216"/>
        <dbReference type="EC" id="2.7.11.1"/>
    </reaction>
</comment>
<comment type="subcellular location">
    <subcellularLocation>
        <location evidence="1">Nucleus</location>
    </subcellularLocation>
</comment>
<comment type="similarity">
    <text evidence="2">Belongs to the protein kinase superfamily. Ser/Thr protein kinase family.</text>
</comment>
<evidence type="ECO:0000250" key="1"/>
<evidence type="ECO:0000255" key="2">
    <source>
        <dbReference type="PROSITE-ProRule" id="PRU00159"/>
    </source>
</evidence>
<evidence type="ECO:0000255" key="3">
    <source>
        <dbReference type="PROSITE-ProRule" id="PRU10027"/>
    </source>
</evidence>
<accession>Q6NU98</accession>
<protein>
    <recommendedName>
        <fullName>Serine/threonine-protein kinase pdik1l-B</fullName>
        <ecNumber>2.7.11.1</ecNumber>
    </recommendedName>
</protein>
<proteinExistence type="evidence at transcript level"/>
<reference key="1">
    <citation type="submission" date="2004-04" db="EMBL/GenBank/DDBJ databases">
        <authorList>
            <consortium name="NIH - Xenopus Gene Collection (XGC) project"/>
        </authorList>
    </citation>
    <scope>NUCLEOTIDE SEQUENCE [LARGE SCALE MRNA]</scope>
    <source>
        <tissue>Ovary</tissue>
    </source>
</reference>
<keyword id="KW-0067">ATP-binding</keyword>
<keyword id="KW-0418">Kinase</keyword>
<keyword id="KW-0547">Nucleotide-binding</keyword>
<keyword id="KW-0539">Nucleus</keyword>
<keyword id="KW-1185">Reference proteome</keyword>
<keyword id="KW-0723">Serine/threonine-protein kinase</keyword>
<keyword id="KW-0808">Transferase</keyword>
<feature type="chain" id="PRO_0000086499" description="Serine/threonine-protein kinase pdik1l-B">
    <location>
        <begin position="1"/>
        <end position="339"/>
    </location>
</feature>
<feature type="domain" description="Protein kinase" evidence="2">
    <location>
        <begin position="8"/>
        <end position="332"/>
    </location>
</feature>
<feature type="active site" description="Proton acceptor" evidence="2 3">
    <location>
        <position position="164"/>
    </location>
</feature>
<feature type="binding site" evidence="2">
    <location>
        <begin position="14"/>
        <end position="22"/>
    </location>
    <ligand>
        <name>ATP</name>
        <dbReference type="ChEBI" id="CHEBI:30616"/>
    </ligand>
</feature>
<feature type="binding site" evidence="2">
    <location>
        <position position="37"/>
    </location>
    <ligand>
        <name>ATP</name>
        <dbReference type="ChEBI" id="CHEBI:30616"/>
    </ligand>
</feature>
<organism>
    <name type="scientific">Xenopus laevis</name>
    <name type="common">African clawed frog</name>
    <dbReference type="NCBI Taxonomy" id="8355"/>
    <lineage>
        <taxon>Eukaryota</taxon>
        <taxon>Metazoa</taxon>
        <taxon>Chordata</taxon>
        <taxon>Craniata</taxon>
        <taxon>Vertebrata</taxon>
        <taxon>Euteleostomi</taxon>
        <taxon>Amphibia</taxon>
        <taxon>Batrachia</taxon>
        <taxon>Anura</taxon>
        <taxon>Pipoidea</taxon>
        <taxon>Pipidae</taxon>
        <taxon>Xenopodinae</taxon>
        <taxon>Xenopus</taxon>
        <taxon>Xenopus</taxon>
    </lineage>
</organism>